<proteinExistence type="predicted"/>
<organism>
    <name type="scientific">Escherichia coli (strain K12)</name>
    <dbReference type="NCBI Taxonomy" id="83333"/>
    <lineage>
        <taxon>Bacteria</taxon>
        <taxon>Pseudomonadati</taxon>
        <taxon>Pseudomonadota</taxon>
        <taxon>Gammaproteobacteria</taxon>
        <taxon>Enterobacterales</taxon>
        <taxon>Enterobacteriaceae</taxon>
        <taxon>Escherichia</taxon>
    </lineage>
</organism>
<dbReference type="EMBL" id="U28377">
    <property type="protein sequence ID" value="AAA69165.1"/>
    <property type="molecule type" value="Genomic_DNA"/>
</dbReference>
<dbReference type="EMBL" id="U00096">
    <property type="protein sequence ID" value="AAC76034.1"/>
    <property type="molecule type" value="Genomic_DNA"/>
</dbReference>
<dbReference type="EMBL" id="AP009048">
    <property type="protein sequence ID" value="BAE77059.1"/>
    <property type="molecule type" value="Genomic_DNA"/>
</dbReference>
<dbReference type="PIR" id="D65086">
    <property type="entry name" value="D65086"/>
</dbReference>
<dbReference type="RefSeq" id="NP_417472.1">
    <property type="nucleotide sequence ID" value="NC_000913.3"/>
</dbReference>
<dbReference type="RefSeq" id="WP_001059136.1">
    <property type="nucleotide sequence ID" value="NZ_STEB01000001.1"/>
</dbReference>
<dbReference type="BioGRID" id="4262377">
    <property type="interactions" value="50"/>
</dbReference>
<dbReference type="DIP" id="DIP-35982N"/>
<dbReference type="FunCoup" id="P64574">
    <property type="interactions" value="199"/>
</dbReference>
<dbReference type="IntAct" id="P64574">
    <property type="interactions" value="32"/>
</dbReference>
<dbReference type="STRING" id="511145.b2998"/>
<dbReference type="PaxDb" id="511145-b2998"/>
<dbReference type="EnsemblBacteria" id="AAC76034">
    <property type="protein sequence ID" value="AAC76034"/>
    <property type="gene ID" value="b2998"/>
</dbReference>
<dbReference type="GeneID" id="93778987"/>
<dbReference type="GeneID" id="947485"/>
<dbReference type="KEGG" id="ecj:JW2966"/>
<dbReference type="KEGG" id="eco:b2998"/>
<dbReference type="KEGG" id="ecoc:C3026_16400"/>
<dbReference type="PATRIC" id="fig|511145.12.peg.3093"/>
<dbReference type="EchoBASE" id="EB2829"/>
<dbReference type="eggNOG" id="ENOG5031RXH">
    <property type="taxonomic scope" value="Bacteria"/>
</dbReference>
<dbReference type="HOGENOM" id="CLU_156478_0_0_6"/>
<dbReference type="InParanoid" id="P64574"/>
<dbReference type="OMA" id="RYFMAGY"/>
<dbReference type="OrthoDB" id="6412871at2"/>
<dbReference type="PhylomeDB" id="P64574"/>
<dbReference type="BioCyc" id="EcoCyc:G7555-MONOMER"/>
<dbReference type="PRO" id="PR:P64574"/>
<dbReference type="Proteomes" id="UP000000625">
    <property type="component" value="Chromosome"/>
</dbReference>
<dbReference type="GO" id="GO:1901422">
    <property type="term" value="P:response to butan-1-ol"/>
    <property type="evidence" value="ECO:0000270"/>
    <property type="project" value="EcoCyc"/>
</dbReference>
<dbReference type="InterPro" id="IPR022574">
    <property type="entry name" value="DUF2623"/>
</dbReference>
<dbReference type="Pfam" id="PF11115">
    <property type="entry name" value="DUF2623"/>
    <property type="match status" value="1"/>
</dbReference>
<sequence>MNNHFGKGLMAGLKATHADSAVNVTKFCADYKRGFVLGYSHRMYEKTGDRQLSAWEAGILTRRYGLDKEMVMDFFRENNSCSTLRFFMAGYRLEN</sequence>
<keyword id="KW-1185">Reference proteome</keyword>
<accession>P64574</accession>
<accession>Q2M9J7</accession>
<accession>Q46848</accession>
<protein>
    <recommendedName>
        <fullName>Uncharacterized protein YghW</fullName>
    </recommendedName>
</protein>
<gene>
    <name type="primary">yghW</name>
    <name type="ordered locus">b2998</name>
    <name type="ordered locus">JW2966</name>
</gene>
<reference key="1">
    <citation type="journal article" date="1997" name="Science">
        <title>The complete genome sequence of Escherichia coli K-12.</title>
        <authorList>
            <person name="Blattner F.R."/>
            <person name="Plunkett G. III"/>
            <person name="Bloch C.A."/>
            <person name="Perna N.T."/>
            <person name="Burland V."/>
            <person name="Riley M."/>
            <person name="Collado-Vides J."/>
            <person name="Glasner J.D."/>
            <person name="Rode C.K."/>
            <person name="Mayhew G.F."/>
            <person name="Gregor J."/>
            <person name="Davis N.W."/>
            <person name="Kirkpatrick H.A."/>
            <person name="Goeden M.A."/>
            <person name="Rose D.J."/>
            <person name="Mau B."/>
            <person name="Shao Y."/>
        </authorList>
    </citation>
    <scope>NUCLEOTIDE SEQUENCE [LARGE SCALE GENOMIC DNA]</scope>
    <source>
        <strain>K12 / MG1655 / ATCC 47076</strain>
    </source>
</reference>
<reference key="2">
    <citation type="journal article" date="2006" name="Mol. Syst. Biol.">
        <title>Highly accurate genome sequences of Escherichia coli K-12 strains MG1655 and W3110.</title>
        <authorList>
            <person name="Hayashi K."/>
            <person name="Morooka N."/>
            <person name="Yamamoto Y."/>
            <person name="Fujita K."/>
            <person name="Isono K."/>
            <person name="Choi S."/>
            <person name="Ohtsubo E."/>
            <person name="Baba T."/>
            <person name="Wanner B.L."/>
            <person name="Mori H."/>
            <person name="Horiuchi T."/>
        </authorList>
    </citation>
    <scope>NUCLEOTIDE SEQUENCE [LARGE SCALE GENOMIC DNA]</scope>
    <source>
        <strain>K12 / W3110 / ATCC 27325 / DSM 5911</strain>
    </source>
</reference>
<name>YGHW_ECOLI</name>
<feature type="chain" id="PRO_0000169394" description="Uncharacterized protein YghW">
    <location>
        <begin position="1"/>
        <end position="95"/>
    </location>
</feature>